<gene>
    <name evidence="1" type="primary">atpB</name>
    <name type="ORF">PSC0550</name>
</gene>
<protein>
    <recommendedName>
        <fullName evidence="1">ATP synthase subunit beta, chloroplastic</fullName>
        <ecNumber evidence="1">7.1.2.2</ecNumber>
    </recommendedName>
    <alternativeName>
        <fullName evidence="1">ATP synthase F1 sector subunit beta</fullName>
    </alternativeName>
    <alternativeName>
        <fullName evidence="1">F-ATPase subunit beta</fullName>
    </alternativeName>
</protein>
<accession>Q68RZ9</accession>
<sequence length="498" mass="53690">MRINPTTSGSGVSTLEKKNLGNITQIIGPVLDIAFPPGKMPNIYNALVVKDRDTVGQQINVTCEVQQLLGNNRVRAVAMSATDGLTRGMEVIDTGAPLSVPVGGTTLGRIFNVLGEPVDNLGPVDTRTTSPIHRSAPAFIQLDTKLSIFETGIKVVDLLAPYRRGGKIGLFGGAGVGKTVLIMELINNIAKAHGGVSVFGGVGERTRGGNDLYMEMKESGVINEQNIAESKVALVYGQMNEPPGARMRVGLTALTMAEYFRDVNEQDVLLFIDNIFRFVQAGSEVSALLGRMPSAVGYQPTLSTEMGTLQERITSTKEGSITSIQAVYVPADDLTDPAPATTFAHLDATTVLSRGLAAKGIYPAVDPLDSTSTMLQPRIVGEEHYETAQRVKQTLQRYKELQDIIAILGLDELSEEDRLTVARARKIERFLSQPFFVAEVFTGSPGKYVGLAETIRGFQLILSGELDGLPEQAFYLVGNIDEATAKAMNLEMESNLKK</sequence>
<evidence type="ECO:0000255" key="1">
    <source>
        <dbReference type="HAMAP-Rule" id="MF_01347"/>
    </source>
</evidence>
<reference key="1">
    <citation type="journal article" date="2004" name="DNA Res.">
        <title>Complete chloroplast genome sequence from Korea ginseng (Panax schinseng Nees) and comparative analysis of sequence evolution among 17 vascular plants.</title>
        <authorList>
            <person name="Kim K.-J."/>
            <person name="Lee H.-L."/>
        </authorList>
    </citation>
    <scope>NUCLEOTIDE SEQUENCE [LARGE SCALE GENOMIC DNA]</scope>
</reference>
<organism>
    <name type="scientific">Panax ginseng</name>
    <name type="common">Korean ginseng</name>
    <dbReference type="NCBI Taxonomy" id="4054"/>
    <lineage>
        <taxon>Eukaryota</taxon>
        <taxon>Viridiplantae</taxon>
        <taxon>Streptophyta</taxon>
        <taxon>Embryophyta</taxon>
        <taxon>Tracheophyta</taxon>
        <taxon>Spermatophyta</taxon>
        <taxon>Magnoliopsida</taxon>
        <taxon>eudicotyledons</taxon>
        <taxon>Gunneridae</taxon>
        <taxon>Pentapetalae</taxon>
        <taxon>asterids</taxon>
        <taxon>campanulids</taxon>
        <taxon>Apiales</taxon>
        <taxon>Araliaceae</taxon>
        <taxon>Panax</taxon>
    </lineage>
</organism>
<feature type="chain" id="PRO_0000254508" description="ATP synthase subunit beta, chloroplastic">
    <location>
        <begin position="1"/>
        <end position="498"/>
    </location>
</feature>
<feature type="binding site" evidence="1">
    <location>
        <begin position="172"/>
        <end position="179"/>
    </location>
    <ligand>
        <name>ATP</name>
        <dbReference type="ChEBI" id="CHEBI:30616"/>
    </ligand>
</feature>
<comment type="function">
    <text evidence="1">Produces ATP from ADP in the presence of a proton gradient across the membrane. The catalytic sites are hosted primarily by the beta subunits.</text>
</comment>
<comment type="catalytic activity">
    <reaction evidence="1">
        <text>ATP + H2O + 4 H(+)(in) = ADP + phosphate + 5 H(+)(out)</text>
        <dbReference type="Rhea" id="RHEA:57720"/>
        <dbReference type="ChEBI" id="CHEBI:15377"/>
        <dbReference type="ChEBI" id="CHEBI:15378"/>
        <dbReference type="ChEBI" id="CHEBI:30616"/>
        <dbReference type="ChEBI" id="CHEBI:43474"/>
        <dbReference type="ChEBI" id="CHEBI:456216"/>
        <dbReference type="EC" id="7.1.2.2"/>
    </reaction>
</comment>
<comment type="subunit">
    <text evidence="1">F-type ATPases have 2 components, CF(1) - the catalytic core - and CF(0) - the membrane proton channel. CF(1) has five subunits: alpha(3), beta(3), gamma(1), delta(1), epsilon(1). CF(0) has four main subunits: a(1), b(1), b'(1) and c(9-12).</text>
</comment>
<comment type="subcellular location">
    <subcellularLocation>
        <location evidence="1">Plastid</location>
        <location evidence="1">Chloroplast thylakoid membrane</location>
        <topology evidence="1">Peripheral membrane protein</topology>
    </subcellularLocation>
</comment>
<comment type="similarity">
    <text evidence="1">Belongs to the ATPase alpha/beta chains family.</text>
</comment>
<name>ATPB_PANGI</name>
<dbReference type="EC" id="7.1.2.2" evidence="1"/>
<dbReference type="EMBL" id="AY582139">
    <property type="protein sequence ID" value="AAT98516.1"/>
    <property type="molecule type" value="Genomic_DNA"/>
</dbReference>
<dbReference type="RefSeq" id="YP_086973.1">
    <property type="nucleotide sequence ID" value="NC_006290.1"/>
</dbReference>
<dbReference type="SMR" id="Q68RZ9"/>
<dbReference type="GeneID" id="3021548"/>
<dbReference type="GO" id="GO:0009535">
    <property type="term" value="C:chloroplast thylakoid membrane"/>
    <property type="evidence" value="ECO:0007669"/>
    <property type="project" value="UniProtKB-SubCell"/>
</dbReference>
<dbReference type="GO" id="GO:0005739">
    <property type="term" value="C:mitochondrion"/>
    <property type="evidence" value="ECO:0007669"/>
    <property type="project" value="GOC"/>
</dbReference>
<dbReference type="GO" id="GO:0045259">
    <property type="term" value="C:proton-transporting ATP synthase complex"/>
    <property type="evidence" value="ECO:0007669"/>
    <property type="project" value="UniProtKB-KW"/>
</dbReference>
<dbReference type="GO" id="GO:0005524">
    <property type="term" value="F:ATP binding"/>
    <property type="evidence" value="ECO:0007669"/>
    <property type="project" value="UniProtKB-UniRule"/>
</dbReference>
<dbReference type="GO" id="GO:0016887">
    <property type="term" value="F:ATP hydrolysis activity"/>
    <property type="evidence" value="ECO:0007669"/>
    <property type="project" value="InterPro"/>
</dbReference>
<dbReference type="GO" id="GO:0046933">
    <property type="term" value="F:proton-transporting ATP synthase activity, rotational mechanism"/>
    <property type="evidence" value="ECO:0007669"/>
    <property type="project" value="UniProtKB-UniRule"/>
</dbReference>
<dbReference type="GO" id="GO:0042776">
    <property type="term" value="P:proton motive force-driven mitochondrial ATP synthesis"/>
    <property type="evidence" value="ECO:0007669"/>
    <property type="project" value="TreeGrafter"/>
</dbReference>
<dbReference type="CDD" id="cd18110">
    <property type="entry name" value="ATP-synt_F1_beta_C"/>
    <property type="match status" value="1"/>
</dbReference>
<dbReference type="CDD" id="cd18115">
    <property type="entry name" value="ATP-synt_F1_beta_N"/>
    <property type="match status" value="1"/>
</dbReference>
<dbReference type="CDD" id="cd01133">
    <property type="entry name" value="F1-ATPase_beta_CD"/>
    <property type="match status" value="1"/>
</dbReference>
<dbReference type="FunFam" id="1.10.1140.10:FF:000001">
    <property type="entry name" value="ATP synthase subunit beta"/>
    <property type="match status" value="1"/>
</dbReference>
<dbReference type="FunFam" id="3.40.50.300:FF:000004">
    <property type="entry name" value="ATP synthase subunit beta"/>
    <property type="match status" value="1"/>
</dbReference>
<dbReference type="FunFam" id="2.40.10.170:FF:000002">
    <property type="entry name" value="ATP synthase subunit beta, chloroplastic"/>
    <property type="match status" value="1"/>
</dbReference>
<dbReference type="Gene3D" id="2.40.10.170">
    <property type="match status" value="1"/>
</dbReference>
<dbReference type="Gene3D" id="1.10.1140.10">
    <property type="entry name" value="Bovine Mitochondrial F1-atpase, Atp Synthase Beta Chain, Chain D, domain 3"/>
    <property type="match status" value="1"/>
</dbReference>
<dbReference type="Gene3D" id="3.40.50.300">
    <property type="entry name" value="P-loop containing nucleotide triphosphate hydrolases"/>
    <property type="match status" value="1"/>
</dbReference>
<dbReference type="HAMAP" id="MF_01347">
    <property type="entry name" value="ATP_synth_beta_bact"/>
    <property type="match status" value="1"/>
</dbReference>
<dbReference type="InterPro" id="IPR003593">
    <property type="entry name" value="AAA+_ATPase"/>
</dbReference>
<dbReference type="InterPro" id="IPR055190">
    <property type="entry name" value="ATP-synt_VA_C"/>
</dbReference>
<dbReference type="InterPro" id="IPR005722">
    <property type="entry name" value="ATP_synth_F1_bsu"/>
</dbReference>
<dbReference type="InterPro" id="IPR020003">
    <property type="entry name" value="ATPase_a/bsu_AS"/>
</dbReference>
<dbReference type="InterPro" id="IPR050053">
    <property type="entry name" value="ATPase_alpha/beta_chains"/>
</dbReference>
<dbReference type="InterPro" id="IPR004100">
    <property type="entry name" value="ATPase_F1/V1/A1_a/bsu_N"/>
</dbReference>
<dbReference type="InterPro" id="IPR036121">
    <property type="entry name" value="ATPase_F1/V1/A1_a/bsu_N_sf"/>
</dbReference>
<dbReference type="InterPro" id="IPR000194">
    <property type="entry name" value="ATPase_F1/V1/A1_a/bsu_nucl-bd"/>
</dbReference>
<dbReference type="InterPro" id="IPR024034">
    <property type="entry name" value="ATPase_F1/V1_b/a_C"/>
</dbReference>
<dbReference type="InterPro" id="IPR027417">
    <property type="entry name" value="P-loop_NTPase"/>
</dbReference>
<dbReference type="NCBIfam" id="TIGR01039">
    <property type="entry name" value="atpD"/>
    <property type="match status" value="1"/>
</dbReference>
<dbReference type="PANTHER" id="PTHR15184">
    <property type="entry name" value="ATP SYNTHASE"/>
    <property type="match status" value="1"/>
</dbReference>
<dbReference type="PANTHER" id="PTHR15184:SF71">
    <property type="entry name" value="ATP SYNTHASE SUBUNIT BETA, MITOCHONDRIAL"/>
    <property type="match status" value="1"/>
</dbReference>
<dbReference type="Pfam" id="PF00006">
    <property type="entry name" value="ATP-synt_ab"/>
    <property type="match status" value="1"/>
</dbReference>
<dbReference type="Pfam" id="PF02874">
    <property type="entry name" value="ATP-synt_ab_N"/>
    <property type="match status" value="1"/>
</dbReference>
<dbReference type="Pfam" id="PF22919">
    <property type="entry name" value="ATP-synt_VA_C"/>
    <property type="match status" value="1"/>
</dbReference>
<dbReference type="SMART" id="SM00382">
    <property type="entry name" value="AAA"/>
    <property type="match status" value="1"/>
</dbReference>
<dbReference type="SUPFAM" id="SSF47917">
    <property type="entry name" value="C-terminal domain of alpha and beta subunits of F1 ATP synthase"/>
    <property type="match status" value="1"/>
</dbReference>
<dbReference type="SUPFAM" id="SSF50615">
    <property type="entry name" value="N-terminal domain of alpha and beta subunits of F1 ATP synthase"/>
    <property type="match status" value="1"/>
</dbReference>
<dbReference type="SUPFAM" id="SSF52540">
    <property type="entry name" value="P-loop containing nucleoside triphosphate hydrolases"/>
    <property type="match status" value="1"/>
</dbReference>
<dbReference type="PROSITE" id="PS00152">
    <property type="entry name" value="ATPASE_ALPHA_BETA"/>
    <property type="match status" value="1"/>
</dbReference>
<keyword id="KW-0066">ATP synthesis</keyword>
<keyword id="KW-0067">ATP-binding</keyword>
<keyword id="KW-0139">CF(1)</keyword>
<keyword id="KW-0150">Chloroplast</keyword>
<keyword id="KW-0375">Hydrogen ion transport</keyword>
<keyword id="KW-0406">Ion transport</keyword>
<keyword id="KW-0472">Membrane</keyword>
<keyword id="KW-0547">Nucleotide-binding</keyword>
<keyword id="KW-0934">Plastid</keyword>
<keyword id="KW-0793">Thylakoid</keyword>
<keyword id="KW-1278">Translocase</keyword>
<keyword id="KW-0813">Transport</keyword>
<geneLocation type="chloroplast"/>
<proteinExistence type="inferred from homology"/>